<keyword id="KW-0963">Cytoplasm</keyword>
<keyword id="KW-0489">Methyltransferase</keyword>
<keyword id="KW-0698">rRNA processing</keyword>
<keyword id="KW-0949">S-adenosyl-L-methionine</keyword>
<keyword id="KW-0808">Transferase</keyword>
<feature type="chain" id="PRO_1000194994" description="Ribosomal RNA large subunit methyltransferase E">
    <location>
        <begin position="1"/>
        <end position="209"/>
    </location>
</feature>
<feature type="active site" description="Proton acceptor" evidence="1">
    <location>
        <position position="164"/>
    </location>
</feature>
<feature type="binding site" evidence="1">
    <location>
        <position position="63"/>
    </location>
    <ligand>
        <name>S-adenosyl-L-methionine</name>
        <dbReference type="ChEBI" id="CHEBI:59789"/>
    </ligand>
</feature>
<feature type="binding site" evidence="1">
    <location>
        <position position="65"/>
    </location>
    <ligand>
        <name>S-adenosyl-L-methionine</name>
        <dbReference type="ChEBI" id="CHEBI:59789"/>
    </ligand>
</feature>
<feature type="binding site" evidence="1">
    <location>
        <position position="83"/>
    </location>
    <ligand>
        <name>S-adenosyl-L-methionine</name>
        <dbReference type="ChEBI" id="CHEBI:59789"/>
    </ligand>
</feature>
<feature type="binding site" evidence="1">
    <location>
        <position position="99"/>
    </location>
    <ligand>
        <name>S-adenosyl-L-methionine</name>
        <dbReference type="ChEBI" id="CHEBI:59789"/>
    </ligand>
</feature>
<feature type="binding site" evidence="1">
    <location>
        <position position="124"/>
    </location>
    <ligand>
        <name>S-adenosyl-L-methionine</name>
        <dbReference type="ChEBI" id="CHEBI:59789"/>
    </ligand>
</feature>
<organism>
    <name type="scientific">Escherichia coli O157:H7 (strain EC4115 / EHEC)</name>
    <dbReference type="NCBI Taxonomy" id="444450"/>
    <lineage>
        <taxon>Bacteria</taxon>
        <taxon>Pseudomonadati</taxon>
        <taxon>Pseudomonadota</taxon>
        <taxon>Gammaproteobacteria</taxon>
        <taxon>Enterobacterales</taxon>
        <taxon>Enterobacteriaceae</taxon>
        <taxon>Escherichia</taxon>
    </lineage>
</organism>
<name>RLME_ECO5E</name>
<proteinExistence type="inferred from homology"/>
<dbReference type="EC" id="2.1.1.166" evidence="1"/>
<dbReference type="EMBL" id="CP001164">
    <property type="protein sequence ID" value="ACI34806.1"/>
    <property type="molecule type" value="Genomic_DNA"/>
</dbReference>
<dbReference type="RefSeq" id="WP_000145975.1">
    <property type="nucleotide sequence ID" value="NC_011353.1"/>
</dbReference>
<dbReference type="SMR" id="B5YS68"/>
<dbReference type="GeneID" id="93778802"/>
<dbReference type="KEGG" id="ecf:ECH74115_4501"/>
<dbReference type="HOGENOM" id="CLU_009422_4_0_6"/>
<dbReference type="GO" id="GO:0005737">
    <property type="term" value="C:cytoplasm"/>
    <property type="evidence" value="ECO:0007669"/>
    <property type="project" value="UniProtKB-SubCell"/>
</dbReference>
<dbReference type="GO" id="GO:0008650">
    <property type="term" value="F:rRNA (uridine-2'-O-)-methyltransferase activity"/>
    <property type="evidence" value="ECO:0007669"/>
    <property type="project" value="UniProtKB-UniRule"/>
</dbReference>
<dbReference type="CDD" id="cd02440">
    <property type="entry name" value="AdoMet_MTases"/>
    <property type="match status" value="1"/>
</dbReference>
<dbReference type="FunFam" id="3.40.50.150:FF:000005">
    <property type="entry name" value="Ribosomal RNA large subunit methyltransferase E"/>
    <property type="match status" value="1"/>
</dbReference>
<dbReference type="Gene3D" id="3.40.50.150">
    <property type="entry name" value="Vaccinia Virus protein VP39"/>
    <property type="match status" value="1"/>
</dbReference>
<dbReference type="HAMAP" id="MF_01547">
    <property type="entry name" value="RNA_methyltr_E"/>
    <property type="match status" value="1"/>
</dbReference>
<dbReference type="InterPro" id="IPR050082">
    <property type="entry name" value="RNA_methyltr_RlmE"/>
</dbReference>
<dbReference type="InterPro" id="IPR002877">
    <property type="entry name" value="RNA_MeTrfase_FtsJ_dom"/>
</dbReference>
<dbReference type="InterPro" id="IPR015507">
    <property type="entry name" value="rRNA-MeTfrase_E"/>
</dbReference>
<dbReference type="InterPro" id="IPR004512">
    <property type="entry name" value="rRNA_MeTrfase_gammaproteobac"/>
</dbReference>
<dbReference type="InterPro" id="IPR029063">
    <property type="entry name" value="SAM-dependent_MTases_sf"/>
</dbReference>
<dbReference type="NCBIfam" id="NF008390">
    <property type="entry name" value="PRK11188.1"/>
    <property type="match status" value="1"/>
</dbReference>
<dbReference type="NCBIfam" id="TIGR00438">
    <property type="entry name" value="rrmJ"/>
    <property type="match status" value="1"/>
</dbReference>
<dbReference type="PANTHER" id="PTHR10920">
    <property type="entry name" value="RIBOSOMAL RNA METHYLTRANSFERASE"/>
    <property type="match status" value="1"/>
</dbReference>
<dbReference type="PANTHER" id="PTHR10920:SF18">
    <property type="entry name" value="RRNA METHYLTRANSFERASE 2, MITOCHONDRIAL"/>
    <property type="match status" value="1"/>
</dbReference>
<dbReference type="Pfam" id="PF01728">
    <property type="entry name" value="FtsJ"/>
    <property type="match status" value="1"/>
</dbReference>
<dbReference type="PIRSF" id="PIRSF005461">
    <property type="entry name" value="23S_rRNA_mtase"/>
    <property type="match status" value="1"/>
</dbReference>
<dbReference type="SUPFAM" id="SSF53335">
    <property type="entry name" value="S-adenosyl-L-methionine-dependent methyltransferases"/>
    <property type="match status" value="1"/>
</dbReference>
<comment type="function">
    <text evidence="1">Specifically methylates the uridine in position 2552 of 23S rRNA at the 2'-O position of the ribose in the fully assembled 50S ribosomal subunit.</text>
</comment>
<comment type="catalytic activity">
    <reaction evidence="1">
        <text>uridine(2552) in 23S rRNA + S-adenosyl-L-methionine = 2'-O-methyluridine(2552) in 23S rRNA + S-adenosyl-L-homocysteine + H(+)</text>
        <dbReference type="Rhea" id="RHEA:42720"/>
        <dbReference type="Rhea" id="RHEA-COMP:10202"/>
        <dbReference type="Rhea" id="RHEA-COMP:10203"/>
        <dbReference type="ChEBI" id="CHEBI:15378"/>
        <dbReference type="ChEBI" id="CHEBI:57856"/>
        <dbReference type="ChEBI" id="CHEBI:59789"/>
        <dbReference type="ChEBI" id="CHEBI:65315"/>
        <dbReference type="ChEBI" id="CHEBI:74478"/>
        <dbReference type="EC" id="2.1.1.166"/>
    </reaction>
</comment>
<comment type="subcellular location">
    <subcellularLocation>
        <location evidence="1">Cytoplasm</location>
    </subcellularLocation>
</comment>
<comment type="similarity">
    <text evidence="1">Belongs to the class I-like SAM-binding methyltransferase superfamily. RNA methyltransferase RlmE family.</text>
</comment>
<gene>
    <name evidence="1" type="primary">rlmE</name>
    <name evidence="1" type="synonym">ftsJ</name>
    <name evidence="1" type="synonym">rrmJ</name>
    <name type="ordered locus">ECH74115_4501</name>
</gene>
<protein>
    <recommendedName>
        <fullName evidence="1">Ribosomal RNA large subunit methyltransferase E</fullName>
        <ecNumber evidence="1">2.1.1.166</ecNumber>
    </recommendedName>
    <alternativeName>
        <fullName evidence="1">23S rRNA Um2552 methyltransferase</fullName>
    </alternativeName>
    <alternativeName>
        <fullName evidence="1">rRNA (uridine-2'-O-)-methyltransferase</fullName>
    </alternativeName>
</protein>
<reference key="1">
    <citation type="journal article" date="2011" name="Proc. Natl. Acad. Sci. U.S.A.">
        <title>Genomic anatomy of Escherichia coli O157:H7 outbreaks.</title>
        <authorList>
            <person name="Eppinger M."/>
            <person name="Mammel M.K."/>
            <person name="Leclerc J.E."/>
            <person name="Ravel J."/>
            <person name="Cebula T.A."/>
        </authorList>
    </citation>
    <scope>NUCLEOTIDE SEQUENCE [LARGE SCALE GENOMIC DNA]</scope>
    <source>
        <strain>EC4115 / EHEC</strain>
    </source>
</reference>
<evidence type="ECO:0000255" key="1">
    <source>
        <dbReference type="HAMAP-Rule" id="MF_01547"/>
    </source>
</evidence>
<accession>B5YS68</accession>
<sequence>MTGKKRSASSSRWLQEHFSDKYVQQAQKKGLRSRAWFKLDEIQQSDKLFKPGMTVVDLGAAPGGWSQYVVTQIGGKGRIIACDLLPMDPIVGVDFLQGDFRDELVMKALLERVGDSKVQVVMSDMAPNMSGTPAVDIPRAMYLVELALEMCRDVLAPGGSFVVKVFQGEGFDEYLREIRSLFTKVKVRKPDSSRARSREVYIVATGRKP</sequence>